<accession>Q6LXE5</accession>
<comment type="similarity">
    <text evidence="1">Belongs to the SUI1 family.</text>
</comment>
<evidence type="ECO:0000255" key="1">
    <source>
        <dbReference type="HAMAP-Rule" id="MF_00604"/>
    </source>
</evidence>
<proteinExistence type="inferred from homology"/>
<name>SUI1_METMP</name>
<gene>
    <name type="ordered locus">MMP1406</name>
</gene>
<sequence length="102" mass="11504">MPEICPICGLPKDLCVCEEIAKEEQKIKVYVTKRRFGKLMTVVDGFDADLIDVKDLAKKLKDICACGGTVKKDSIELQGDHRRKAEETLIKMGFSKDMIDVR</sequence>
<dbReference type="EMBL" id="BX950229">
    <property type="protein sequence ID" value="CAF30962.1"/>
    <property type="molecule type" value="Genomic_DNA"/>
</dbReference>
<dbReference type="SMR" id="Q6LXE5"/>
<dbReference type="STRING" id="267377.MMP1406"/>
<dbReference type="EnsemblBacteria" id="CAF30962">
    <property type="protein sequence ID" value="CAF30962"/>
    <property type="gene ID" value="MMP1406"/>
</dbReference>
<dbReference type="KEGG" id="mmp:MMP1406"/>
<dbReference type="PATRIC" id="fig|267377.15.peg.1442"/>
<dbReference type="eggNOG" id="arCOG04223">
    <property type="taxonomic scope" value="Archaea"/>
</dbReference>
<dbReference type="HOGENOM" id="CLU_082805_6_1_2"/>
<dbReference type="OrthoDB" id="11182at2157"/>
<dbReference type="Proteomes" id="UP000000590">
    <property type="component" value="Chromosome"/>
</dbReference>
<dbReference type="GO" id="GO:0003729">
    <property type="term" value="F:mRNA binding"/>
    <property type="evidence" value="ECO:0007669"/>
    <property type="project" value="TreeGrafter"/>
</dbReference>
<dbReference type="GO" id="GO:0003743">
    <property type="term" value="F:translation initiation factor activity"/>
    <property type="evidence" value="ECO:0007669"/>
    <property type="project" value="InterPro"/>
</dbReference>
<dbReference type="GO" id="GO:0001731">
    <property type="term" value="P:formation of translation preinitiation complex"/>
    <property type="evidence" value="ECO:0007669"/>
    <property type="project" value="TreeGrafter"/>
</dbReference>
<dbReference type="GO" id="GO:0006417">
    <property type="term" value="P:regulation of translation"/>
    <property type="evidence" value="ECO:0007669"/>
    <property type="project" value="UniProtKB-UniRule"/>
</dbReference>
<dbReference type="GO" id="GO:0002188">
    <property type="term" value="P:translation reinitiation"/>
    <property type="evidence" value="ECO:0007669"/>
    <property type="project" value="TreeGrafter"/>
</dbReference>
<dbReference type="CDD" id="cd11567">
    <property type="entry name" value="YciH_like"/>
    <property type="match status" value="1"/>
</dbReference>
<dbReference type="Gene3D" id="3.30.780.10">
    <property type="entry name" value="SUI1-like domain"/>
    <property type="match status" value="1"/>
</dbReference>
<dbReference type="HAMAP" id="MF_00604">
    <property type="entry name" value="SUI1"/>
    <property type="match status" value="1"/>
</dbReference>
<dbReference type="InterPro" id="IPR050318">
    <property type="entry name" value="DENR/SUI1_TIF"/>
</dbReference>
<dbReference type="InterPro" id="IPR001950">
    <property type="entry name" value="SUI1"/>
</dbReference>
<dbReference type="InterPro" id="IPR022851">
    <property type="entry name" value="SUI1_arc"/>
</dbReference>
<dbReference type="InterPro" id="IPR005872">
    <property type="entry name" value="SUI1_arc_bac"/>
</dbReference>
<dbReference type="InterPro" id="IPR036877">
    <property type="entry name" value="SUI1_dom_sf"/>
</dbReference>
<dbReference type="NCBIfam" id="NF002096">
    <property type="entry name" value="PRK00939.1"/>
    <property type="match status" value="1"/>
</dbReference>
<dbReference type="NCBIfam" id="TIGR01158">
    <property type="entry name" value="SUI1_rel"/>
    <property type="match status" value="1"/>
</dbReference>
<dbReference type="PANTHER" id="PTHR12789:SF0">
    <property type="entry name" value="DENSITY-REGULATED PROTEIN"/>
    <property type="match status" value="1"/>
</dbReference>
<dbReference type="PANTHER" id="PTHR12789">
    <property type="entry name" value="DENSITY-REGULATED PROTEIN HOMOLOG"/>
    <property type="match status" value="1"/>
</dbReference>
<dbReference type="Pfam" id="PF01253">
    <property type="entry name" value="SUI1"/>
    <property type="match status" value="1"/>
</dbReference>
<dbReference type="PIRSF" id="PIRSF037511">
    <property type="entry name" value="Transl_init_SUI1_pro"/>
    <property type="match status" value="1"/>
</dbReference>
<dbReference type="SUPFAM" id="SSF55159">
    <property type="entry name" value="eIF1-like"/>
    <property type="match status" value="1"/>
</dbReference>
<dbReference type="PROSITE" id="PS50296">
    <property type="entry name" value="SUI1"/>
    <property type="match status" value="1"/>
</dbReference>
<organism>
    <name type="scientific">Methanococcus maripaludis (strain DSM 14266 / JCM 13030 / NBRC 101832 / S2 / LL)</name>
    <dbReference type="NCBI Taxonomy" id="267377"/>
    <lineage>
        <taxon>Archaea</taxon>
        <taxon>Methanobacteriati</taxon>
        <taxon>Methanobacteriota</taxon>
        <taxon>Methanomada group</taxon>
        <taxon>Methanococci</taxon>
        <taxon>Methanococcales</taxon>
        <taxon>Methanococcaceae</taxon>
        <taxon>Methanococcus</taxon>
    </lineage>
</organism>
<feature type="chain" id="PRO_0000130583" description="Protein translation factor SUI1 homolog">
    <location>
        <begin position="1"/>
        <end position="102"/>
    </location>
</feature>
<reference key="1">
    <citation type="journal article" date="2004" name="J. Bacteriol.">
        <title>Complete genome sequence of the genetically tractable hydrogenotrophic methanogen Methanococcus maripaludis.</title>
        <authorList>
            <person name="Hendrickson E.L."/>
            <person name="Kaul R."/>
            <person name="Zhou Y."/>
            <person name="Bovee D."/>
            <person name="Chapman P."/>
            <person name="Chung J."/>
            <person name="Conway de Macario E."/>
            <person name="Dodsworth J.A."/>
            <person name="Gillett W."/>
            <person name="Graham D.E."/>
            <person name="Hackett M."/>
            <person name="Haydock A.K."/>
            <person name="Kang A."/>
            <person name="Land M.L."/>
            <person name="Levy R."/>
            <person name="Lie T.J."/>
            <person name="Major T.A."/>
            <person name="Moore B.C."/>
            <person name="Porat I."/>
            <person name="Palmeiri A."/>
            <person name="Rouse G."/>
            <person name="Saenphimmachak C."/>
            <person name="Soell D."/>
            <person name="Van Dien S."/>
            <person name="Wang T."/>
            <person name="Whitman W.B."/>
            <person name="Xia Q."/>
            <person name="Zhang Y."/>
            <person name="Larimer F.W."/>
            <person name="Olson M.V."/>
            <person name="Leigh J.A."/>
        </authorList>
    </citation>
    <scope>NUCLEOTIDE SEQUENCE [LARGE SCALE GENOMIC DNA]</scope>
    <source>
        <strain>DSM 14266 / JCM 13030 / NBRC 101832 / S2 / LL</strain>
    </source>
</reference>
<protein>
    <recommendedName>
        <fullName evidence="1">Protein translation factor SUI1 homolog</fullName>
    </recommendedName>
</protein>
<keyword id="KW-0648">Protein biosynthesis</keyword>
<keyword id="KW-1185">Reference proteome</keyword>
<keyword id="KW-0810">Translation regulation</keyword>